<evidence type="ECO:0000255" key="1">
    <source>
        <dbReference type="HAMAP-Rule" id="MF_00001"/>
    </source>
</evidence>
<sequence>MSIHPQLNKNGELQHLLTTEGLPVTILRHILDTAESFTGVTERDVKKIPLLRGKSVFNLFFEPSTRTRTTFEIAAKRLSADVINLSMAVSSQTKGETLLDTVNNLSAMHADMFVVRHNQSGAAHLIARHVGPEIHVINAGDGWHAHPTQALLDMFTIRRYKQDFHTLRVAIIGDILHSRVARSQIHALTTLGVPEIRVIAPKTLLPARVERLGVHVYHNMTQGLKDVDVLMMLRLQHERMESAHLPSTEEYFKYYGLTPGKLLLARSDAIVMHPGPMNRGVEIDSEVADGSQSVILPQVGFGIAVRMAVMSILAGN</sequence>
<name>PYRB_NITEC</name>
<dbReference type="EC" id="2.1.3.2" evidence="1"/>
<dbReference type="EMBL" id="CP000450">
    <property type="protein sequence ID" value="ABI58728.1"/>
    <property type="molecule type" value="Genomic_DNA"/>
</dbReference>
<dbReference type="RefSeq" id="WP_011633570.1">
    <property type="nucleotide sequence ID" value="NC_008344.1"/>
</dbReference>
<dbReference type="SMR" id="Q0AIU3"/>
<dbReference type="STRING" id="335283.Neut_0451"/>
<dbReference type="KEGG" id="net:Neut_0451"/>
<dbReference type="eggNOG" id="COG0540">
    <property type="taxonomic scope" value="Bacteria"/>
</dbReference>
<dbReference type="HOGENOM" id="CLU_043846_2_0_4"/>
<dbReference type="OrthoDB" id="9774690at2"/>
<dbReference type="UniPathway" id="UPA00070">
    <property type="reaction ID" value="UER00116"/>
</dbReference>
<dbReference type="Proteomes" id="UP000001966">
    <property type="component" value="Chromosome"/>
</dbReference>
<dbReference type="GO" id="GO:0005829">
    <property type="term" value="C:cytosol"/>
    <property type="evidence" value="ECO:0007669"/>
    <property type="project" value="TreeGrafter"/>
</dbReference>
<dbReference type="GO" id="GO:0016597">
    <property type="term" value="F:amino acid binding"/>
    <property type="evidence" value="ECO:0007669"/>
    <property type="project" value="InterPro"/>
</dbReference>
<dbReference type="GO" id="GO:0004070">
    <property type="term" value="F:aspartate carbamoyltransferase activity"/>
    <property type="evidence" value="ECO:0007669"/>
    <property type="project" value="UniProtKB-UniRule"/>
</dbReference>
<dbReference type="GO" id="GO:0006207">
    <property type="term" value="P:'de novo' pyrimidine nucleobase biosynthetic process"/>
    <property type="evidence" value="ECO:0007669"/>
    <property type="project" value="InterPro"/>
</dbReference>
<dbReference type="GO" id="GO:0044205">
    <property type="term" value="P:'de novo' UMP biosynthetic process"/>
    <property type="evidence" value="ECO:0007669"/>
    <property type="project" value="UniProtKB-UniRule"/>
</dbReference>
<dbReference type="GO" id="GO:0006520">
    <property type="term" value="P:amino acid metabolic process"/>
    <property type="evidence" value="ECO:0007669"/>
    <property type="project" value="InterPro"/>
</dbReference>
<dbReference type="FunFam" id="3.40.50.1370:FF:000007">
    <property type="entry name" value="Aspartate carbamoyltransferase"/>
    <property type="match status" value="1"/>
</dbReference>
<dbReference type="Gene3D" id="3.40.50.1370">
    <property type="entry name" value="Aspartate/ornithine carbamoyltransferase"/>
    <property type="match status" value="2"/>
</dbReference>
<dbReference type="HAMAP" id="MF_00001">
    <property type="entry name" value="Asp_carb_tr"/>
    <property type="match status" value="1"/>
</dbReference>
<dbReference type="InterPro" id="IPR006132">
    <property type="entry name" value="Asp/Orn_carbamoyltranf_P-bd"/>
</dbReference>
<dbReference type="InterPro" id="IPR006130">
    <property type="entry name" value="Asp/Orn_carbamoylTrfase"/>
</dbReference>
<dbReference type="InterPro" id="IPR036901">
    <property type="entry name" value="Asp/Orn_carbamoylTrfase_sf"/>
</dbReference>
<dbReference type="InterPro" id="IPR002082">
    <property type="entry name" value="Asp_carbamoyltransf"/>
</dbReference>
<dbReference type="InterPro" id="IPR006131">
    <property type="entry name" value="Asp_carbamoyltransf_Asp/Orn-bd"/>
</dbReference>
<dbReference type="NCBIfam" id="TIGR00670">
    <property type="entry name" value="asp_carb_tr"/>
    <property type="match status" value="1"/>
</dbReference>
<dbReference type="NCBIfam" id="NF002032">
    <property type="entry name" value="PRK00856.1"/>
    <property type="match status" value="1"/>
</dbReference>
<dbReference type="PANTHER" id="PTHR45753:SF6">
    <property type="entry name" value="ASPARTATE CARBAMOYLTRANSFERASE"/>
    <property type="match status" value="1"/>
</dbReference>
<dbReference type="PANTHER" id="PTHR45753">
    <property type="entry name" value="ORNITHINE CARBAMOYLTRANSFERASE, MITOCHONDRIAL"/>
    <property type="match status" value="1"/>
</dbReference>
<dbReference type="Pfam" id="PF00185">
    <property type="entry name" value="OTCace"/>
    <property type="match status" value="1"/>
</dbReference>
<dbReference type="Pfam" id="PF02729">
    <property type="entry name" value="OTCace_N"/>
    <property type="match status" value="1"/>
</dbReference>
<dbReference type="PRINTS" id="PR00100">
    <property type="entry name" value="AOTCASE"/>
</dbReference>
<dbReference type="PRINTS" id="PR00101">
    <property type="entry name" value="ATCASE"/>
</dbReference>
<dbReference type="SUPFAM" id="SSF53671">
    <property type="entry name" value="Aspartate/ornithine carbamoyltransferase"/>
    <property type="match status" value="1"/>
</dbReference>
<dbReference type="PROSITE" id="PS00097">
    <property type="entry name" value="CARBAMOYLTRANSFERASE"/>
    <property type="match status" value="1"/>
</dbReference>
<protein>
    <recommendedName>
        <fullName evidence="1">Aspartate carbamoyltransferase catalytic subunit</fullName>
        <ecNumber evidence="1">2.1.3.2</ecNumber>
    </recommendedName>
    <alternativeName>
        <fullName evidence="1">Aspartate transcarbamylase</fullName>
        <shortName evidence="1">ATCase</shortName>
    </alternativeName>
</protein>
<comment type="function">
    <text evidence="1">Catalyzes the condensation of carbamoyl phosphate and aspartate to form carbamoyl aspartate and inorganic phosphate, the committed step in the de novo pyrimidine nucleotide biosynthesis pathway.</text>
</comment>
<comment type="catalytic activity">
    <reaction evidence="1">
        <text>carbamoyl phosphate + L-aspartate = N-carbamoyl-L-aspartate + phosphate + H(+)</text>
        <dbReference type="Rhea" id="RHEA:20013"/>
        <dbReference type="ChEBI" id="CHEBI:15378"/>
        <dbReference type="ChEBI" id="CHEBI:29991"/>
        <dbReference type="ChEBI" id="CHEBI:32814"/>
        <dbReference type="ChEBI" id="CHEBI:43474"/>
        <dbReference type="ChEBI" id="CHEBI:58228"/>
        <dbReference type="EC" id="2.1.3.2"/>
    </reaction>
</comment>
<comment type="pathway">
    <text evidence="1">Pyrimidine metabolism; UMP biosynthesis via de novo pathway; (S)-dihydroorotate from bicarbonate: step 2/3.</text>
</comment>
<comment type="subunit">
    <text evidence="1">Heterododecamer (2C3:3R2) of six catalytic PyrB chains organized as two trimers (C3), and six regulatory PyrI chains organized as three dimers (R2).</text>
</comment>
<comment type="similarity">
    <text evidence="1">Belongs to the aspartate/ornithine carbamoyltransferase superfamily. ATCase family.</text>
</comment>
<proteinExistence type="inferred from homology"/>
<accession>Q0AIU3</accession>
<feature type="chain" id="PRO_0000321125" description="Aspartate carbamoyltransferase catalytic subunit">
    <location>
        <begin position="1"/>
        <end position="316"/>
    </location>
</feature>
<feature type="binding site" evidence="1">
    <location>
        <position position="66"/>
    </location>
    <ligand>
        <name>carbamoyl phosphate</name>
        <dbReference type="ChEBI" id="CHEBI:58228"/>
    </ligand>
</feature>
<feature type="binding site" evidence="1">
    <location>
        <position position="67"/>
    </location>
    <ligand>
        <name>carbamoyl phosphate</name>
        <dbReference type="ChEBI" id="CHEBI:58228"/>
    </ligand>
</feature>
<feature type="binding site" evidence="1">
    <location>
        <position position="94"/>
    </location>
    <ligand>
        <name>L-aspartate</name>
        <dbReference type="ChEBI" id="CHEBI:29991"/>
    </ligand>
</feature>
<feature type="binding site" evidence="1">
    <location>
        <position position="116"/>
    </location>
    <ligand>
        <name>carbamoyl phosphate</name>
        <dbReference type="ChEBI" id="CHEBI:58228"/>
    </ligand>
</feature>
<feature type="binding site" evidence="1">
    <location>
        <position position="146"/>
    </location>
    <ligand>
        <name>carbamoyl phosphate</name>
        <dbReference type="ChEBI" id="CHEBI:58228"/>
    </ligand>
</feature>
<feature type="binding site" evidence="1">
    <location>
        <position position="149"/>
    </location>
    <ligand>
        <name>carbamoyl phosphate</name>
        <dbReference type="ChEBI" id="CHEBI:58228"/>
    </ligand>
</feature>
<feature type="binding site" evidence="1">
    <location>
        <position position="179"/>
    </location>
    <ligand>
        <name>L-aspartate</name>
        <dbReference type="ChEBI" id="CHEBI:29991"/>
    </ligand>
</feature>
<feature type="binding site" evidence="1">
    <location>
        <position position="234"/>
    </location>
    <ligand>
        <name>L-aspartate</name>
        <dbReference type="ChEBI" id="CHEBI:29991"/>
    </ligand>
</feature>
<feature type="binding site" evidence="1">
    <location>
        <position position="275"/>
    </location>
    <ligand>
        <name>carbamoyl phosphate</name>
        <dbReference type="ChEBI" id="CHEBI:58228"/>
    </ligand>
</feature>
<feature type="binding site" evidence="1">
    <location>
        <position position="276"/>
    </location>
    <ligand>
        <name>carbamoyl phosphate</name>
        <dbReference type="ChEBI" id="CHEBI:58228"/>
    </ligand>
</feature>
<keyword id="KW-0665">Pyrimidine biosynthesis</keyword>
<keyword id="KW-0808">Transferase</keyword>
<gene>
    <name evidence="1" type="primary">pyrB</name>
    <name type="ordered locus">Neut_0451</name>
</gene>
<organism>
    <name type="scientific">Nitrosomonas eutropha (strain DSM 101675 / C91 / Nm57)</name>
    <dbReference type="NCBI Taxonomy" id="335283"/>
    <lineage>
        <taxon>Bacteria</taxon>
        <taxon>Pseudomonadati</taxon>
        <taxon>Pseudomonadota</taxon>
        <taxon>Betaproteobacteria</taxon>
        <taxon>Nitrosomonadales</taxon>
        <taxon>Nitrosomonadaceae</taxon>
        <taxon>Nitrosomonas</taxon>
    </lineage>
</organism>
<reference key="1">
    <citation type="journal article" date="2007" name="Environ. Microbiol.">
        <title>Whole-genome analysis of the ammonia-oxidizing bacterium, Nitrosomonas eutropha C91: implications for niche adaptation.</title>
        <authorList>
            <person name="Stein L.Y."/>
            <person name="Arp D.J."/>
            <person name="Berube P.M."/>
            <person name="Chain P.S."/>
            <person name="Hauser L."/>
            <person name="Jetten M.S."/>
            <person name="Klotz M.G."/>
            <person name="Larimer F.W."/>
            <person name="Norton J.M."/>
            <person name="Op den Camp H.J.M."/>
            <person name="Shin M."/>
            <person name="Wei X."/>
        </authorList>
    </citation>
    <scope>NUCLEOTIDE SEQUENCE [LARGE SCALE GENOMIC DNA]</scope>
    <source>
        <strain>DSM 101675 / C91 / Nm57</strain>
    </source>
</reference>